<keyword id="KW-0067">ATP-binding</keyword>
<keyword id="KW-0963">Cytoplasm</keyword>
<keyword id="KW-0418">Kinase</keyword>
<keyword id="KW-0547">Nucleotide-binding</keyword>
<keyword id="KW-0665">Pyrimidine biosynthesis</keyword>
<keyword id="KW-0808">Transferase</keyword>
<gene>
    <name evidence="1" type="primary">pyrH</name>
    <name type="ordered locus">RT0144</name>
</gene>
<evidence type="ECO:0000255" key="1">
    <source>
        <dbReference type="HAMAP-Rule" id="MF_01220"/>
    </source>
</evidence>
<organism>
    <name type="scientific">Rickettsia typhi (strain ATCC VR-144 / Wilmington)</name>
    <dbReference type="NCBI Taxonomy" id="257363"/>
    <lineage>
        <taxon>Bacteria</taxon>
        <taxon>Pseudomonadati</taxon>
        <taxon>Pseudomonadota</taxon>
        <taxon>Alphaproteobacteria</taxon>
        <taxon>Rickettsiales</taxon>
        <taxon>Rickettsiaceae</taxon>
        <taxon>Rickettsieae</taxon>
        <taxon>Rickettsia</taxon>
        <taxon>typhus group</taxon>
    </lineage>
</organism>
<protein>
    <recommendedName>
        <fullName evidence="1">Uridylate kinase</fullName>
        <shortName evidence="1">UK</shortName>
        <ecNumber evidence="1">2.7.4.22</ecNumber>
    </recommendedName>
    <alternativeName>
        <fullName evidence="1">Uridine monophosphate kinase</fullName>
        <shortName evidence="1">UMP kinase</shortName>
        <shortName evidence="1">UMPK</shortName>
    </alternativeName>
</protein>
<comment type="function">
    <text evidence="1">Catalyzes the reversible phosphorylation of UMP to UDP.</text>
</comment>
<comment type="catalytic activity">
    <reaction evidence="1">
        <text>UMP + ATP = UDP + ADP</text>
        <dbReference type="Rhea" id="RHEA:24400"/>
        <dbReference type="ChEBI" id="CHEBI:30616"/>
        <dbReference type="ChEBI" id="CHEBI:57865"/>
        <dbReference type="ChEBI" id="CHEBI:58223"/>
        <dbReference type="ChEBI" id="CHEBI:456216"/>
        <dbReference type="EC" id="2.7.4.22"/>
    </reaction>
</comment>
<comment type="activity regulation">
    <text evidence="1">Inhibited by UTP.</text>
</comment>
<comment type="pathway">
    <text evidence="1">Pyrimidine metabolism; CTP biosynthesis via de novo pathway; UDP from UMP (UMPK route): step 1/1.</text>
</comment>
<comment type="subunit">
    <text evidence="1">Homohexamer.</text>
</comment>
<comment type="subcellular location">
    <subcellularLocation>
        <location evidence="1">Cytoplasm</location>
    </subcellularLocation>
</comment>
<comment type="similarity">
    <text evidence="1">Belongs to the UMP kinase family.</text>
</comment>
<proteinExistence type="inferred from homology"/>
<reference key="1">
    <citation type="journal article" date="2004" name="J. Bacteriol.">
        <title>Complete genome sequence of Rickettsia typhi and comparison with sequences of other Rickettsiae.</title>
        <authorList>
            <person name="McLeod M.P."/>
            <person name="Qin X."/>
            <person name="Karpathy S.E."/>
            <person name="Gioia J."/>
            <person name="Highlander S.K."/>
            <person name="Fox G.E."/>
            <person name="McNeill T.Z."/>
            <person name="Jiang H."/>
            <person name="Muzny D."/>
            <person name="Jacob L.S."/>
            <person name="Hawes A.C."/>
            <person name="Sodergren E."/>
            <person name="Gill R."/>
            <person name="Hume J."/>
            <person name="Morgan M."/>
            <person name="Fan G."/>
            <person name="Amin A.G."/>
            <person name="Gibbs R.A."/>
            <person name="Hong C."/>
            <person name="Yu X.-J."/>
            <person name="Walker D.H."/>
            <person name="Weinstock G.M."/>
        </authorList>
    </citation>
    <scope>NUCLEOTIDE SEQUENCE [LARGE SCALE GENOMIC DNA]</scope>
    <source>
        <strain>ATCC VR-144 / Wilmington</strain>
    </source>
</reference>
<dbReference type="EC" id="2.7.4.22" evidence="1"/>
<dbReference type="EMBL" id="AE017197">
    <property type="protein sequence ID" value="AAU03629.1"/>
    <property type="molecule type" value="Genomic_DNA"/>
</dbReference>
<dbReference type="SMR" id="Q68XL3"/>
<dbReference type="KEGG" id="rty:RT0144"/>
<dbReference type="eggNOG" id="COG0528">
    <property type="taxonomic scope" value="Bacteria"/>
</dbReference>
<dbReference type="HOGENOM" id="CLU_033861_0_0_5"/>
<dbReference type="UniPathway" id="UPA00159">
    <property type="reaction ID" value="UER00275"/>
</dbReference>
<dbReference type="Proteomes" id="UP000000604">
    <property type="component" value="Chromosome"/>
</dbReference>
<dbReference type="GO" id="GO:0005737">
    <property type="term" value="C:cytoplasm"/>
    <property type="evidence" value="ECO:0007669"/>
    <property type="project" value="UniProtKB-SubCell"/>
</dbReference>
<dbReference type="GO" id="GO:0005524">
    <property type="term" value="F:ATP binding"/>
    <property type="evidence" value="ECO:0007669"/>
    <property type="project" value="UniProtKB-KW"/>
</dbReference>
<dbReference type="GO" id="GO:0033862">
    <property type="term" value="F:UMP kinase activity"/>
    <property type="evidence" value="ECO:0007669"/>
    <property type="project" value="UniProtKB-EC"/>
</dbReference>
<dbReference type="GO" id="GO:0044210">
    <property type="term" value="P:'de novo' CTP biosynthetic process"/>
    <property type="evidence" value="ECO:0007669"/>
    <property type="project" value="UniProtKB-UniRule"/>
</dbReference>
<dbReference type="GO" id="GO:0006225">
    <property type="term" value="P:UDP biosynthetic process"/>
    <property type="evidence" value="ECO:0007669"/>
    <property type="project" value="TreeGrafter"/>
</dbReference>
<dbReference type="CDD" id="cd04254">
    <property type="entry name" value="AAK_UMPK-PyrH-Ec"/>
    <property type="match status" value="1"/>
</dbReference>
<dbReference type="FunFam" id="3.40.1160.10:FF:000001">
    <property type="entry name" value="Uridylate kinase"/>
    <property type="match status" value="1"/>
</dbReference>
<dbReference type="Gene3D" id="3.40.1160.10">
    <property type="entry name" value="Acetylglutamate kinase-like"/>
    <property type="match status" value="1"/>
</dbReference>
<dbReference type="HAMAP" id="MF_01220_B">
    <property type="entry name" value="PyrH_B"/>
    <property type="match status" value="1"/>
</dbReference>
<dbReference type="InterPro" id="IPR036393">
    <property type="entry name" value="AceGlu_kinase-like_sf"/>
</dbReference>
<dbReference type="InterPro" id="IPR001048">
    <property type="entry name" value="Asp/Glu/Uridylate_kinase"/>
</dbReference>
<dbReference type="InterPro" id="IPR011817">
    <property type="entry name" value="Uridylate_kinase"/>
</dbReference>
<dbReference type="InterPro" id="IPR015963">
    <property type="entry name" value="Uridylate_kinase_bac"/>
</dbReference>
<dbReference type="NCBIfam" id="TIGR02075">
    <property type="entry name" value="pyrH_bact"/>
    <property type="match status" value="1"/>
</dbReference>
<dbReference type="PANTHER" id="PTHR42833">
    <property type="entry name" value="URIDYLATE KINASE"/>
    <property type="match status" value="1"/>
</dbReference>
<dbReference type="PANTHER" id="PTHR42833:SF4">
    <property type="entry name" value="URIDYLATE KINASE PUMPKIN, CHLOROPLASTIC"/>
    <property type="match status" value="1"/>
</dbReference>
<dbReference type="Pfam" id="PF00696">
    <property type="entry name" value="AA_kinase"/>
    <property type="match status" value="1"/>
</dbReference>
<dbReference type="PIRSF" id="PIRSF005650">
    <property type="entry name" value="Uridylate_kin"/>
    <property type="match status" value="1"/>
</dbReference>
<dbReference type="SUPFAM" id="SSF53633">
    <property type="entry name" value="Carbamate kinase-like"/>
    <property type="match status" value="1"/>
</dbReference>
<feature type="chain" id="PRO_0000272400" description="Uridylate kinase">
    <location>
        <begin position="1"/>
        <end position="244"/>
    </location>
</feature>
<feature type="binding site" evidence="1">
    <location>
        <begin position="18"/>
        <end position="21"/>
    </location>
    <ligand>
        <name>ATP</name>
        <dbReference type="ChEBI" id="CHEBI:30616"/>
    </ligand>
</feature>
<feature type="binding site" evidence="1">
    <location>
        <position position="60"/>
    </location>
    <ligand>
        <name>UMP</name>
        <dbReference type="ChEBI" id="CHEBI:57865"/>
    </ligand>
</feature>
<feature type="binding site" evidence="1">
    <location>
        <position position="61"/>
    </location>
    <ligand>
        <name>ATP</name>
        <dbReference type="ChEBI" id="CHEBI:30616"/>
    </ligand>
</feature>
<feature type="binding site" evidence="1">
    <location>
        <position position="65"/>
    </location>
    <ligand>
        <name>ATP</name>
        <dbReference type="ChEBI" id="CHEBI:30616"/>
    </ligand>
</feature>
<feature type="binding site" evidence="1">
    <location>
        <position position="80"/>
    </location>
    <ligand>
        <name>UMP</name>
        <dbReference type="ChEBI" id="CHEBI:57865"/>
    </ligand>
</feature>
<feature type="binding site" evidence="1">
    <location>
        <begin position="141"/>
        <end position="148"/>
    </location>
    <ligand>
        <name>UMP</name>
        <dbReference type="ChEBI" id="CHEBI:57865"/>
    </ligand>
</feature>
<feature type="binding site" evidence="1">
    <location>
        <position position="168"/>
    </location>
    <ligand>
        <name>ATP</name>
        <dbReference type="ChEBI" id="CHEBI:30616"/>
    </ligand>
</feature>
<feature type="binding site" evidence="1">
    <location>
        <position position="169"/>
    </location>
    <ligand>
        <name>ATP</name>
        <dbReference type="ChEBI" id="CHEBI:30616"/>
    </ligand>
</feature>
<feature type="binding site" evidence="1">
    <location>
        <position position="174"/>
    </location>
    <ligand>
        <name>ATP</name>
        <dbReference type="ChEBI" id="CHEBI:30616"/>
    </ligand>
</feature>
<feature type="binding site" evidence="1">
    <location>
        <position position="177"/>
    </location>
    <ligand>
        <name>ATP</name>
        <dbReference type="ChEBI" id="CHEBI:30616"/>
    </ligand>
</feature>
<sequence length="244" mass="26971">MKMVSDINALKYKKVLLKVSGEALMGNKQFGHEYEVIKKIAEDIKEVIDLGLEVAIVVGGGNIYRGINAALVGMDRASADYIGMLATVINALTLQNVMESLGIYTRVLSAIPMMSVCEPYIRRKAKRHMEKKRVVIFAGGTGNPFCTTDSAAVLRAIEMNCDILLKATQVDGVYDSDPKKNPNAKKYFTISYKDVITNHLQVMDTAAIAVARENKLPIRVFSIKEHGNIARVIQNKGKYTTIEE</sequence>
<accession>Q68XL3</accession>
<name>PYRH_RICTY</name>